<keyword id="KW-0007">Acetylation</keyword>
<keyword id="KW-0963">Cytoplasm</keyword>
<keyword id="KW-0687">Ribonucleoprotein</keyword>
<keyword id="KW-0689">Ribosomal protein</keyword>
<feature type="initiator methionine" description="Removed" evidence="1">
    <location>
        <position position="1"/>
    </location>
</feature>
<feature type="chain" id="PRO_0000389371" description="Small ribosomal subunit protein eS1">
    <location>
        <begin position="2"/>
        <end position="255"/>
    </location>
</feature>
<feature type="region of interest" description="Disordered" evidence="2">
    <location>
        <begin position="1"/>
        <end position="20"/>
    </location>
</feature>
<feature type="compositionally biased region" description="Basic residues" evidence="2">
    <location>
        <begin position="1"/>
        <end position="18"/>
    </location>
</feature>
<feature type="modified residue" description="N-acetylalanine; partial" evidence="1">
    <location>
        <position position="2"/>
    </location>
</feature>
<gene>
    <name evidence="1" type="primary">RPS1</name>
    <name type="ORF">CPC735_028580</name>
</gene>
<protein>
    <recommendedName>
        <fullName evidence="1">Small ribosomal subunit protein eS1</fullName>
    </recommendedName>
    <alternativeName>
        <fullName evidence="3">40S ribosomal protein S1</fullName>
    </alternativeName>
</protein>
<organism>
    <name type="scientific">Coccidioides posadasii (strain C735)</name>
    <name type="common">Valley fever fungus</name>
    <dbReference type="NCBI Taxonomy" id="222929"/>
    <lineage>
        <taxon>Eukaryota</taxon>
        <taxon>Fungi</taxon>
        <taxon>Dikarya</taxon>
        <taxon>Ascomycota</taxon>
        <taxon>Pezizomycotina</taxon>
        <taxon>Eurotiomycetes</taxon>
        <taxon>Eurotiomycetidae</taxon>
        <taxon>Onygenales</taxon>
        <taxon>Onygenaceae</taxon>
        <taxon>Coccidioides</taxon>
    </lineage>
</organism>
<comment type="subunit">
    <text evidence="1">Component of the small ribosomal subunit. Mature ribosomes consist of a small (40S) and a large (60S) subunit. The 40S subunit contains about 33 different proteins and 1 molecule of RNA (18S). The 60S subunit contains about 49 different proteins and 3 molecules of RNA (25S, 5.8S and 5S).</text>
</comment>
<comment type="subcellular location">
    <subcellularLocation>
        <location evidence="1">Cytoplasm</location>
    </subcellularLocation>
</comment>
<comment type="similarity">
    <text evidence="1">Belongs to the eukaryotic ribosomal protein eS1 family.</text>
</comment>
<dbReference type="EMBL" id="ACFW01000025">
    <property type="protein sequence ID" value="EER27522.1"/>
    <property type="molecule type" value="Genomic_DNA"/>
</dbReference>
<dbReference type="RefSeq" id="XP_003069667.1">
    <property type="nucleotide sequence ID" value="XM_003069621.1"/>
</dbReference>
<dbReference type="SMR" id="C5P7X2"/>
<dbReference type="GeneID" id="9695162"/>
<dbReference type="KEGG" id="cpw:9695162"/>
<dbReference type="VEuPathDB" id="FungiDB:CPC735_028580"/>
<dbReference type="HOGENOM" id="CLU_062507_0_0_1"/>
<dbReference type="OrthoDB" id="9834376at2759"/>
<dbReference type="Proteomes" id="UP000009084">
    <property type="component" value="Unassembled WGS sequence"/>
</dbReference>
<dbReference type="GO" id="GO:0022627">
    <property type="term" value="C:cytosolic small ribosomal subunit"/>
    <property type="evidence" value="ECO:0007669"/>
    <property type="project" value="UniProtKB-UniRule"/>
</dbReference>
<dbReference type="GO" id="GO:0003735">
    <property type="term" value="F:structural constituent of ribosome"/>
    <property type="evidence" value="ECO:0007669"/>
    <property type="project" value="UniProtKB-UniRule"/>
</dbReference>
<dbReference type="GO" id="GO:0006412">
    <property type="term" value="P:translation"/>
    <property type="evidence" value="ECO:0007669"/>
    <property type="project" value="UniProtKB-UniRule"/>
</dbReference>
<dbReference type="HAMAP" id="MF_03122">
    <property type="entry name" value="Ribosomal_eS1_euk"/>
    <property type="match status" value="1"/>
</dbReference>
<dbReference type="InterPro" id="IPR001593">
    <property type="entry name" value="Ribosomal_eS1"/>
</dbReference>
<dbReference type="InterPro" id="IPR018281">
    <property type="entry name" value="Ribosomal_eS1_CS"/>
</dbReference>
<dbReference type="InterPro" id="IPR027500">
    <property type="entry name" value="Ribosomal_eS1_euk"/>
</dbReference>
<dbReference type="PANTHER" id="PTHR11830">
    <property type="entry name" value="40S RIBOSOMAL PROTEIN S3A"/>
    <property type="match status" value="1"/>
</dbReference>
<dbReference type="Pfam" id="PF01015">
    <property type="entry name" value="Ribosomal_S3Ae"/>
    <property type="match status" value="1"/>
</dbReference>
<dbReference type="SMART" id="SM01397">
    <property type="entry name" value="Ribosomal_S3Ae"/>
    <property type="match status" value="1"/>
</dbReference>
<dbReference type="PROSITE" id="PS01191">
    <property type="entry name" value="RIBOSOMAL_S3AE"/>
    <property type="match status" value="1"/>
</dbReference>
<proteinExistence type="inferred from homology"/>
<evidence type="ECO:0000255" key="1">
    <source>
        <dbReference type="HAMAP-Rule" id="MF_03122"/>
    </source>
</evidence>
<evidence type="ECO:0000256" key="2">
    <source>
        <dbReference type="SAM" id="MobiDB-lite"/>
    </source>
</evidence>
<evidence type="ECO:0000305" key="3"/>
<accession>C5P7X2</accession>
<name>RS3A_COCP7</name>
<sequence length="255" mass="29087">MAVGKNKRLSKGKKGLKKRVQDPFSRKDEYLVKAPSTFAVRDVGKTIVNRTTGLKNANDSLKGRIFEVSLADLQNDQAHSFRKIKLRVDEVQGKNCLTNFHGMDFTSDKLRSLVRKWQSLIEANVTVKTTDDYLVRLFAIAFTKRRSFQVKKTTYARSSQIRAIRKKMVEIIQREASSRTLTQLTKLVPEVIGREIEKATRGIYPLQNVHIRKVKLLKQPKFDLGGLLALHGEASTDDKGQKVEREFTEQVLESV</sequence>
<reference key="1">
    <citation type="journal article" date="2009" name="Genome Res.">
        <title>Comparative genomic analyses of the human fungal pathogens Coccidioides and their relatives.</title>
        <authorList>
            <person name="Sharpton T.J."/>
            <person name="Stajich J.E."/>
            <person name="Rounsley S.D."/>
            <person name="Gardner M.J."/>
            <person name="Wortman J.R."/>
            <person name="Jordar V.S."/>
            <person name="Maiti R."/>
            <person name="Kodira C.D."/>
            <person name="Neafsey D.E."/>
            <person name="Zeng Q."/>
            <person name="Hung C.-Y."/>
            <person name="McMahan C."/>
            <person name="Muszewska A."/>
            <person name="Grynberg M."/>
            <person name="Mandel M.A."/>
            <person name="Kellner E.M."/>
            <person name="Barker B.M."/>
            <person name="Galgiani J.N."/>
            <person name="Orbach M.J."/>
            <person name="Kirkland T.N."/>
            <person name="Cole G.T."/>
            <person name="Henn M.R."/>
            <person name="Birren B.W."/>
            <person name="Taylor J.W."/>
        </authorList>
    </citation>
    <scope>NUCLEOTIDE SEQUENCE [LARGE SCALE GENOMIC DNA]</scope>
    <source>
        <strain>C735</strain>
    </source>
</reference>